<dbReference type="EC" id="3.1.13.4"/>
<dbReference type="EMBL" id="AAHF01000005">
    <property type="protein sequence ID" value="EAL89519.1"/>
    <property type="molecule type" value="Genomic_DNA"/>
</dbReference>
<dbReference type="RefSeq" id="XP_751557.1">
    <property type="nucleotide sequence ID" value="XM_746464.1"/>
</dbReference>
<dbReference type="SMR" id="Q4WQG5"/>
<dbReference type="FunCoup" id="Q4WQG5">
    <property type="interactions" value="442"/>
</dbReference>
<dbReference type="STRING" id="330879.Q4WQG5"/>
<dbReference type="EnsemblFungi" id="EAL89519">
    <property type="protein sequence ID" value="EAL89519"/>
    <property type="gene ID" value="AFUA_4G12750"/>
</dbReference>
<dbReference type="GeneID" id="3508916"/>
<dbReference type="KEGG" id="afm:AFUA_4G12750"/>
<dbReference type="eggNOG" id="KOG0620">
    <property type="taxonomic scope" value="Eukaryota"/>
</dbReference>
<dbReference type="HOGENOM" id="CLU_016428_4_0_1"/>
<dbReference type="InParanoid" id="Q4WQG5"/>
<dbReference type="OMA" id="PHYYARA"/>
<dbReference type="OrthoDB" id="428734at2759"/>
<dbReference type="Proteomes" id="UP000002530">
    <property type="component" value="Chromosome 4"/>
</dbReference>
<dbReference type="GO" id="GO:0030015">
    <property type="term" value="C:CCR4-NOT core complex"/>
    <property type="evidence" value="ECO:0007669"/>
    <property type="project" value="EnsemblFungi"/>
</dbReference>
<dbReference type="GO" id="GO:0016593">
    <property type="term" value="C:Cdc73/Paf1 complex"/>
    <property type="evidence" value="ECO:0007669"/>
    <property type="project" value="EnsemblFungi"/>
</dbReference>
<dbReference type="GO" id="GO:0000932">
    <property type="term" value="C:P-body"/>
    <property type="evidence" value="ECO:0007669"/>
    <property type="project" value="EnsemblFungi"/>
</dbReference>
<dbReference type="GO" id="GO:0000175">
    <property type="term" value="F:3'-5'-RNA exonuclease activity"/>
    <property type="evidence" value="ECO:0000318"/>
    <property type="project" value="GO_Central"/>
</dbReference>
<dbReference type="GO" id="GO:0046872">
    <property type="term" value="F:metal ion binding"/>
    <property type="evidence" value="ECO:0007669"/>
    <property type="project" value="UniProtKB-KW"/>
</dbReference>
<dbReference type="GO" id="GO:0004535">
    <property type="term" value="F:poly(A)-specific ribonuclease activity"/>
    <property type="evidence" value="ECO:0007669"/>
    <property type="project" value="UniProtKB-EC"/>
</dbReference>
<dbReference type="GO" id="GO:0003723">
    <property type="term" value="F:RNA binding"/>
    <property type="evidence" value="ECO:0007669"/>
    <property type="project" value="UniProtKB-KW"/>
</dbReference>
<dbReference type="GO" id="GO:0006260">
    <property type="term" value="P:DNA replication"/>
    <property type="evidence" value="ECO:0007669"/>
    <property type="project" value="EnsemblFungi"/>
</dbReference>
<dbReference type="GO" id="GO:0000076">
    <property type="term" value="P:DNA replication checkpoint signaling"/>
    <property type="evidence" value="ECO:0007669"/>
    <property type="project" value="EnsemblFungi"/>
</dbReference>
<dbReference type="GO" id="GO:0000289">
    <property type="term" value="P:nuclear-transcribed mRNA poly(A) tail shortening"/>
    <property type="evidence" value="ECO:0007669"/>
    <property type="project" value="EnsemblFungi"/>
</dbReference>
<dbReference type="GO" id="GO:0032968">
    <property type="term" value="P:positive regulation of transcription elongation by RNA polymerase II"/>
    <property type="evidence" value="ECO:0007669"/>
    <property type="project" value="EnsemblFungi"/>
</dbReference>
<dbReference type="GO" id="GO:0006368">
    <property type="term" value="P:transcription elongation by RNA polymerase II"/>
    <property type="evidence" value="ECO:0007669"/>
    <property type="project" value="EnsemblFungi"/>
</dbReference>
<dbReference type="GO" id="GO:0007089">
    <property type="term" value="P:traversing start control point of mitotic cell cycle"/>
    <property type="evidence" value="ECO:0007669"/>
    <property type="project" value="EnsemblFungi"/>
</dbReference>
<dbReference type="CDD" id="cd09097">
    <property type="entry name" value="Deadenylase_CCR4"/>
    <property type="match status" value="1"/>
</dbReference>
<dbReference type="FunFam" id="3.60.10.10:FF:000037">
    <property type="entry name" value="Glucose-repressible alcohol dehydrogenase transcriptional effector"/>
    <property type="match status" value="1"/>
</dbReference>
<dbReference type="FunFam" id="3.80.10.10:FF:000447">
    <property type="entry name" value="Glucose-repressible alcohol dehydrogenase transcriptional effector"/>
    <property type="match status" value="1"/>
</dbReference>
<dbReference type="Gene3D" id="3.60.10.10">
    <property type="entry name" value="Endonuclease/exonuclease/phosphatase"/>
    <property type="match status" value="1"/>
</dbReference>
<dbReference type="Gene3D" id="3.80.10.10">
    <property type="entry name" value="Ribonuclease Inhibitor"/>
    <property type="match status" value="1"/>
</dbReference>
<dbReference type="InterPro" id="IPR050410">
    <property type="entry name" value="CCR4/nocturin_mRNA_transcr"/>
</dbReference>
<dbReference type="InterPro" id="IPR036691">
    <property type="entry name" value="Endo/exonu/phosph_ase_sf"/>
</dbReference>
<dbReference type="InterPro" id="IPR005135">
    <property type="entry name" value="Endo/exonuclease/phosphatase"/>
</dbReference>
<dbReference type="InterPro" id="IPR001611">
    <property type="entry name" value="Leu-rich_rpt"/>
</dbReference>
<dbReference type="InterPro" id="IPR003591">
    <property type="entry name" value="Leu-rich_rpt_typical-subtyp"/>
</dbReference>
<dbReference type="InterPro" id="IPR032675">
    <property type="entry name" value="LRR_dom_sf"/>
</dbReference>
<dbReference type="InterPro" id="IPR055414">
    <property type="entry name" value="LRR_R13L4/SHOC2-like"/>
</dbReference>
<dbReference type="PANTHER" id="PTHR12121">
    <property type="entry name" value="CARBON CATABOLITE REPRESSOR PROTEIN 4"/>
    <property type="match status" value="1"/>
</dbReference>
<dbReference type="PANTHER" id="PTHR12121:SF100">
    <property type="entry name" value="POLY(A)-SPECIFIC RIBONUCLEASE"/>
    <property type="match status" value="1"/>
</dbReference>
<dbReference type="Pfam" id="PF03372">
    <property type="entry name" value="Exo_endo_phos"/>
    <property type="match status" value="1"/>
</dbReference>
<dbReference type="Pfam" id="PF23598">
    <property type="entry name" value="LRR_14"/>
    <property type="match status" value="1"/>
</dbReference>
<dbReference type="SMART" id="SM00369">
    <property type="entry name" value="LRR_TYP"/>
    <property type="match status" value="3"/>
</dbReference>
<dbReference type="SUPFAM" id="SSF56219">
    <property type="entry name" value="DNase I-like"/>
    <property type="match status" value="1"/>
</dbReference>
<dbReference type="SUPFAM" id="SSF52058">
    <property type="entry name" value="L domain-like"/>
    <property type="match status" value="1"/>
</dbReference>
<dbReference type="PROSITE" id="PS51450">
    <property type="entry name" value="LRR"/>
    <property type="match status" value="4"/>
</dbReference>
<keyword id="KW-0010">Activator</keyword>
<keyword id="KW-0963">Cytoplasm</keyword>
<keyword id="KW-0269">Exonuclease</keyword>
<keyword id="KW-0378">Hydrolase</keyword>
<keyword id="KW-0433">Leucine-rich repeat</keyword>
<keyword id="KW-0460">Magnesium</keyword>
<keyword id="KW-0479">Metal-binding</keyword>
<keyword id="KW-0540">Nuclease</keyword>
<keyword id="KW-0539">Nucleus</keyword>
<keyword id="KW-1185">Reference proteome</keyword>
<keyword id="KW-0677">Repeat</keyword>
<keyword id="KW-0678">Repressor</keyword>
<keyword id="KW-0694">RNA-binding</keyword>
<keyword id="KW-0804">Transcription</keyword>
<keyword id="KW-0805">Transcription regulation</keyword>
<proteinExistence type="inferred from homology"/>
<accession>Q4WQG5</accession>
<gene>
    <name type="primary">ccr4</name>
    <name type="ORF">AFUA_4G12750</name>
</gene>
<protein>
    <recommendedName>
        <fullName evidence="5">CCR4-Not complex 3'-5'-exoribonuclease subunit Ccr4</fullName>
        <ecNumber>3.1.13.4</ecNumber>
    </recommendedName>
    <alternativeName>
        <fullName>Carbon catabolite repressor protein 4</fullName>
    </alternativeName>
    <alternativeName>
        <fullName>Cytoplasmic deadenylase</fullName>
    </alternativeName>
    <alternativeName>
        <fullName>Glucose-repressible alcohol dehydrogenase transcriptional effector</fullName>
    </alternativeName>
</protein>
<feature type="chain" id="PRO_0000290603" description="CCR4-Not complex 3'-5'-exoribonuclease subunit Ccr4">
    <location>
        <begin position="1"/>
        <end position="696"/>
    </location>
</feature>
<feature type="repeat" description="LRR 1">
    <location>
        <begin position="181"/>
        <end position="202"/>
    </location>
</feature>
<feature type="repeat" description="LRR 2">
    <location>
        <begin position="204"/>
        <end position="225"/>
    </location>
</feature>
<feature type="repeat" description="LRR 3">
    <location>
        <begin position="227"/>
        <end position="248"/>
    </location>
</feature>
<feature type="repeat" description="LRR 4">
    <location>
        <begin position="250"/>
        <end position="271"/>
    </location>
</feature>
<feature type="region of interest" description="Disordered" evidence="4">
    <location>
        <begin position="30"/>
        <end position="56"/>
    </location>
</feature>
<feature type="region of interest" description="Disordered" evidence="4">
    <location>
        <begin position="95"/>
        <end position="126"/>
    </location>
</feature>
<feature type="compositionally biased region" description="Basic residues" evidence="4">
    <location>
        <begin position="34"/>
        <end position="50"/>
    </location>
</feature>
<feature type="compositionally biased region" description="Polar residues" evidence="4">
    <location>
        <begin position="96"/>
        <end position="113"/>
    </location>
</feature>
<feature type="binding site" evidence="2">
    <location>
        <position position="378"/>
    </location>
    <ligand>
        <name>Mg(2+)</name>
        <dbReference type="ChEBI" id="CHEBI:18420"/>
    </ligand>
</feature>
<organism>
    <name type="scientific">Aspergillus fumigatus (strain ATCC MYA-4609 / CBS 101355 / FGSC A1100 / Af293)</name>
    <name type="common">Neosartorya fumigata</name>
    <dbReference type="NCBI Taxonomy" id="330879"/>
    <lineage>
        <taxon>Eukaryota</taxon>
        <taxon>Fungi</taxon>
        <taxon>Dikarya</taxon>
        <taxon>Ascomycota</taxon>
        <taxon>Pezizomycotina</taxon>
        <taxon>Eurotiomycetes</taxon>
        <taxon>Eurotiomycetidae</taxon>
        <taxon>Eurotiales</taxon>
        <taxon>Aspergillaceae</taxon>
        <taxon>Aspergillus</taxon>
        <taxon>Aspergillus subgen. Fumigati</taxon>
    </lineage>
</organism>
<name>CCR4_ASPFU</name>
<reference key="1">
    <citation type="journal article" date="2005" name="Nature">
        <title>Genomic sequence of the pathogenic and allergenic filamentous fungus Aspergillus fumigatus.</title>
        <authorList>
            <person name="Nierman W.C."/>
            <person name="Pain A."/>
            <person name="Anderson M.J."/>
            <person name="Wortman J.R."/>
            <person name="Kim H.S."/>
            <person name="Arroyo J."/>
            <person name="Berriman M."/>
            <person name="Abe K."/>
            <person name="Archer D.B."/>
            <person name="Bermejo C."/>
            <person name="Bennett J.W."/>
            <person name="Bowyer P."/>
            <person name="Chen D."/>
            <person name="Collins M."/>
            <person name="Coulsen R."/>
            <person name="Davies R."/>
            <person name="Dyer P.S."/>
            <person name="Farman M.L."/>
            <person name="Fedorova N."/>
            <person name="Fedorova N.D."/>
            <person name="Feldblyum T.V."/>
            <person name="Fischer R."/>
            <person name="Fosker N."/>
            <person name="Fraser A."/>
            <person name="Garcia J.L."/>
            <person name="Garcia M.J."/>
            <person name="Goble A."/>
            <person name="Goldman G.H."/>
            <person name="Gomi K."/>
            <person name="Griffith-Jones S."/>
            <person name="Gwilliam R."/>
            <person name="Haas B.J."/>
            <person name="Haas H."/>
            <person name="Harris D.E."/>
            <person name="Horiuchi H."/>
            <person name="Huang J."/>
            <person name="Humphray S."/>
            <person name="Jimenez J."/>
            <person name="Keller N."/>
            <person name="Khouri H."/>
            <person name="Kitamoto K."/>
            <person name="Kobayashi T."/>
            <person name="Konzack S."/>
            <person name="Kulkarni R."/>
            <person name="Kumagai T."/>
            <person name="Lafton A."/>
            <person name="Latge J.-P."/>
            <person name="Li W."/>
            <person name="Lord A."/>
            <person name="Lu C."/>
            <person name="Majoros W.H."/>
            <person name="May G.S."/>
            <person name="Miller B.L."/>
            <person name="Mohamoud Y."/>
            <person name="Molina M."/>
            <person name="Monod M."/>
            <person name="Mouyna I."/>
            <person name="Mulligan S."/>
            <person name="Murphy L.D."/>
            <person name="O'Neil S."/>
            <person name="Paulsen I."/>
            <person name="Penalva M.A."/>
            <person name="Pertea M."/>
            <person name="Price C."/>
            <person name="Pritchard B.L."/>
            <person name="Quail M.A."/>
            <person name="Rabbinowitsch E."/>
            <person name="Rawlins N."/>
            <person name="Rajandream M.A."/>
            <person name="Reichard U."/>
            <person name="Renauld H."/>
            <person name="Robson G.D."/>
            <person name="Rodriguez de Cordoba S."/>
            <person name="Rodriguez-Pena J.M."/>
            <person name="Ronning C.M."/>
            <person name="Rutter S."/>
            <person name="Salzberg S.L."/>
            <person name="Sanchez M."/>
            <person name="Sanchez-Ferrero J.C."/>
            <person name="Saunders D."/>
            <person name="Seeger K."/>
            <person name="Squares R."/>
            <person name="Squares S."/>
            <person name="Takeuchi M."/>
            <person name="Tekaia F."/>
            <person name="Turner G."/>
            <person name="Vazquez de Aldana C.R."/>
            <person name="Weidman J."/>
            <person name="White O."/>
            <person name="Woodward J.R."/>
            <person name="Yu J.-H."/>
            <person name="Fraser C.M."/>
            <person name="Galagan J.E."/>
            <person name="Asai K."/>
            <person name="Machida M."/>
            <person name="Hall N."/>
            <person name="Barrell B.G."/>
            <person name="Denning D.W."/>
        </authorList>
    </citation>
    <scope>NUCLEOTIDE SEQUENCE [LARGE SCALE GENOMIC DNA]</scope>
    <source>
        <strain>ATCC MYA-4609 / CBS 101355 / FGSC A1100 / Af293</strain>
    </source>
</reference>
<comment type="function">
    <text evidence="3">Acts as a catalytic component of the CCR4-NOT core complex, which in the nucleus seems to be a general transcription factor, and in the cytoplasm the major mRNA deadenylase involved in mRNA turnover (By similarity). Ccr4 has 3'-5' RNase activity with a strong preference for polyadenylated substrates and also low exonuclease activity towards single-stranded DNA (By similarity).</text>
</comment>
<comment type="catalytic activity">
    <reaction>
        <text>Exonucleolytic cleavage of poly(A) to 5'-AMP.</text>
        <dbReference type="EC" id="3.1.13.4"/>
    </reaction>
</comment>
<comment type="cofactor">
    <cofactor evidence="1">
        <name>Mg(2+)</name>
        <dbReference type="ChEBI" id="CHEBI:18420"/>
    </cofactor>
</comment>
<comment type="subcellular location">
    <subcellularLocation>
        <location evidence="1">Cytoplasm</location>
    </subcellularLocation>
    <subcellularLocation>
        <location evidence="1">Nucleus</location>
    </subcellularLocation>
</comment>
<comment type="similarity">
    <text evidence="5">Belongs to the CCR4/nocturin family.</text>
</comment>
<sequence length="696" mass="78849">MYSQTHQGQHVMMNGGQAHQRFGMQIPKFQSQSHHPHHTQQPHHHTHHNQASHNINHQHNFSSGALASATPHFTPSHIQNGAHTNVDEDIDESMNEHWQQQLQLAAESRQASSPHYHARSVAQQAKGIQIAPSQPETQEQVPDGQNGVVKAKASSRQGWHALDFGGQGLRALSTSLFNYIFLEKLYLNHNKLKALPPAIGQLRKLNHLDLSGNDLTELPEEIGMLTNLKKLYLFDNNIRTLPYEMGYLYRLETLGVEGNPLNDVLKSHIMKEGTKALIKYLKEEMPAFFFSCTTPLTLMAVHLPPPDRDWIVLDETASSSNHRTDKVTVLSYNTLCDSSATQSHYGYAPARVLSWEFRRELILNELRSHDSDIICLQEIDQGSYNEYFREQLAYNDYKGVYWPRGRAMGMQEEDAKCVDGCATFFKGSKFILLDKQLINFGQTAVRRPDAKGQDDIYNRLWQKDHIAVVVFLENRQTGARFIVVNAHLYWDPAFKDVKLIQTAILMEELTKLSETYAKWPPCTDKAAFRFSKEEGQSETPPLEEPAPSMQYASGDQIPLLMCGDLNSSPGSAAYNLIAHGRLDEEHPDLEKRLYGNLSKVGMTHPFKLKSAYGAIGELPFTNYTPDFKDILDYIWYSSNSLHVSALLGEVDKDYLQRVPGFPNYHFPSDHIALLAEFTVKGKKGKVVEADFGPQRN</sequence>
<evidence type="ECO:0000250" key="1"/>
<evidence type="ECO:0000250" key="2">
    <source>
        <dbReference type="UniProtKB" id="O95551"/>
    </source>
</evidence>
<evidence type="ECO:0000250" key="3">
    <source>
        <dbReference type="UniProtKB" id="P31384"/>
    </source>
</evidence>
<evidence type="ECO:0000256" key="4">
    <source>
        <dbReference type="SAM" id="MobiDB-lite"/>
    </source>
</evidence>
<evidence type="ECO:0000305" key="5"/>